<comment type="function">
    <text evidence="1">An aminoacyl-tRNA editing enzyme that deacylates mischarged D-aminoacyl-tRNAs. Also deacylates mischarged glycyl-tRNA(Ala), protecting cells against glycine mischarging by AlaRS. Acts via tRNA-based rather than protein-based catalysis; rejects L-amino acids rather than detecting D-amino acids in the active site. By recycling D-aminoacyl-tRNA to D-amino acids and free tRNA molecules, this enzyme counteracts the toxicity associated with the formation of D-aminoacyl-tRNA entities in vivo and helps enforce protein L-homochirality.</text>
</comment>
<comment type="catalytic activity">
    <reaction evidence="1">
        <text>glycyl-tRNA(Ala) + H2O = tRNA(Ala) + glycine + H(+)</text>
        <dbReference type="Rhea" id="RHEA:53744"/>
        <dbReference type="Rhea" id="RHEA-COMP:9657"/>
        <dbReference type="Rhea" id="RHEA-COMP:13640"/>
        <dbReference type="ChEBI" id="CHEBI:15377"/>
        <dbReference type="ChEBI" id="CHEBI:15378"/>
        <dbReference type="ChEBI" id="CHEBI:57305"/>
        <dbReference type="ChEBI" id="CHEBI:78442"/>
        <dbReference type="ChEBI" id="CHEBI:78522"/>
        <dbReference type="EC" id="3.1.1.96"/>
    </reaction>
</comment>
<comment type="catalytic activity">
    <reaction evidence="1">
        <text>a D-aminoacyl-tRNA + H2O = a tRNA + a D-alpha-amino acid + H(+)</text>
        <dbReference type="Rhea" id="RHEA:13953"/>
        <dbReference type="Rhea" id="RHEA-COMP:10123"/>
        <dbReference type="Rhea" id="RHEA-COMP:10124"/>
        <dbReference type="ChEBI" id="CHEBI:15377"/>
        <dbReference type="ChEBI" id="CHEBI:15378"/>
        <dbReference type="ChEBI" id="CHEBI:59871"/>
        <dbReference type="ChEBI" id="CHEBI:78442"/>
        <dbReference type="ChEBI" id="CHEBI:79333"/>
        <dbReference type="EC" id="3.1.1.96"/>
    </reaction>
</comment>
<comment type="subunit">
    <text evidence="1">Homodimer.</text>
</comment>
<comment type="subcellular location">
    <subcellularLocation>
        <location evidence="1">Cytoplasm</location>
    </subcellularLocation>
</comment>
<comment type="domain">
    <text evidence="1">A Gly-cisPro motif from one monomer fits into the active site of the other monomer to allow specific chiral rejection of L-amino acids.</text>
</comment>
<comment type="similarity">
    <text evidence="1">Belongs to the DTD family.</text>
</comment>
<organism>
    <name type="scientific">Shigella dysenteriae serotype 1 (strain Sd197)</name>
    <dbReference type="NCBI Taxonomy" id="300267"/>
    <lineage>
        <taxon>Bacteria</taxon>
        <taxon>Pseudomonadati</taxon>
        <taxon>Pseudomonadota</taxon>
        <taxon>Gammaproteobacteria</taxon>
        <taxon>Enterobacterales</taxon>
        <taxon>Enterobacteriaceae</taxon>
        <taxon>Shigella</taxon>
    </lineage>
</organism>
<protein>
    <recommendedName>
        <fullName evidence="1">D-aminoacyl-tRNA deacylase</fullName>
        <shortName evidence="1">DTD</shortName>
        <ecNumber evidence="1">3.1.1.96</ecNumber>
    </recommendedName>
    <alternativeName>
        <fullName evidence="1">Gly-tRNA(Ala) deacylase</fullName>
    </alternativeName>
</protein>
<keyword id="KW-0963">Cytoplasm</keyword>
<keyword id="KW-0378">Hydrolase</keyword>
<keyword id="KW-1185">Reference proteome</keyword>
<keyword id="KW-0694">RNA-binding</keyword>
<keyword id="KW-0820">tRNA-binding</keyword>
<proteinExistence type="inferred from homology"/>
<evidence type="ECO:0000255" key="1">
    <source>
        <dbReference type="HAMAP-Rule" id="MF_00518"/>
    </source>
</evidence>
<dbReference type="EC" id="3.1.1.96" evidence="1"/>
<dbReference type="EMBL" id="CP000034">
    <property type="protein sequence ID" value="ABB63798.1"/>
    <property type="molecule type" value="Genomic_DNA"/>
</dbReference>
<dbReference type="RefSeq" id="WP_000560980.1">
    <property type="nucleotide sequence ID" value="NC_007606.1"/>
</dbReference>
<dbReference type="RefSeq" id="YP_405289.1">
    <property type="nucleotide sequence ID" value="NC_007606.1"/>
</dbReference>
<dbReference type="SMR" id="Q32A57"/>
<dbReference type="STRING" id="300267.SDY_3856"/>
<dbReference type="EnsemblBacteria" id="ABB63798">
    <property type="protein sequence ID" value="ABB63798"/>
    <property type="gene ID" value="SDY_3856"/>
</dbReference>
<dbReference type="KEGG" id="sdy:SDY_3856"/>
<dbReference type="PATRIC" id="fig|300267.13.peg.4556"/>
<dbReference type="HOGENOM" id="CLU_076901_1_0_6"/>
<dbReference type="Proteomes" id="UP000002716">
    <property type="component" value="Chromosome"/>
</dbReference>
<dbReference type="GO" id="GO:0005737">
    <property type="term" value="C:cytoplasm"/>
    <property type="evidence" value="ECO:0007669"/>
    <property type="project" value="UniProtKB-SubCell"/>
</dbReference>
<dbReference type="GO" id="GO:0051500">
    <property type="term" value="F:D-tyrosyl-tRNA(Tyr) deacylase activity"/>
    <property type="evidence" value="ECO:0007669"/>
    <property type="project" value="TreeGrafter"/>
</dbReference>
<dbReference type="GO" id="GO:0106026">
    <property type="term" value="F:Gly-tRNA(Ala) deacylase activity"/>
    <property type="evidence" value="ECO:0007669"/>
    <property type="project" value="UniProtKB-UniRule"/>
</dbReference>
<dbReference type="GO" id="GO:0043908">
    <property type="term" value="F:Ser(Gly)-tRNA(Ala) hydrolase activity"/>
    <property type="evidence" value="ECO:0007669"/>
    <property type="project" value="UniProtKB-UniRule"/>
</dbReference>
<dbReference type="GO" id="GO:0000049">
    <property type="term" value="F:tRNA binding"/>
    <property type="evidence" value="ECO:0007669"/>
    <property type="project" value="UniProtKB-UniRule"/>
</dbReference>
<dbReference type="GO" id="GO:0019478">
    <property type="term" value="P:D-amino acid catabolic process"/>
    <property type="evidence" value="ECO:0007669"/>
    <property type="project" value="UniProtKB-UniRule"/>
</dbReference>
<dbReference type="CDD" id="cd00563">
    <property type="entry name" value="Dtyr_deacylase"/>
    <property type="match status" value="1"/>
</dbReference>
<dbReference type="FunFam" id="3.50.80.10:FF:000001">
    <property type="entry name" value="D-aminoacyl-tRNA deacylase"/>
    <property type="match status" value="1"/>
</dbReference>
<dbReference type="Gene3D" id="3.50.80.10">
    <property type="entry name" value="D-tyrosyl-tRNA(Tyr) deacylase"/>
    <property type="match status" value="1"/>
</dbReference>
<dbReference type="HAMAP" id="MF_00518">
    <property type="entry name" value="Deacylase_Dtd"/>
    <property type="match status" value="1"/>
</dbReference>
<dbReference type="InterPro" id="IPR003732">
    <property type="entry name" value="Daa-tRNA_deacyls_DTD"/>
</dbReference>
<dbReference type="InterPro" id="IPR023509">
    <property type="entry name" value="DTD-like_sf"/>
</dbReference>
<dbReference type="NCBIfam" id="TIGR00256">
    <property type="entry name" value="D-aminoacyl-tRNA deacylase"/>
    <property type="match status" value="1"/>
</dbReference>
<dbReference type="PANTHER" id="PTHR10472:SF5">
    <property type="entry name" value="D-AMINOACYL-TRNA DEACYLASE 1"/>
    <property type="match status" value="1"/>
</dbReference>
<dbReference type="PANTHER" id="PTHR10472">
    <property type="entry name" value="D-TYROSYL-TRNA TYR DEACYLASE"/>
    <property type="match status" value="1"/>
</dbReference>
<dbReference type="Pfam" id="PF02580">
    <property type="entry name" value="Tyr_Deacylase"/>
    <property type="match status" value="1"/>
</dbReference>
<dbReference type="SUPFAM" id="SSF69500">
    <property type="entry name" value="DTD-like"/>
    <property type="match status" value="1"/>
</dbReference>
<name>DTD_SHIDS</name>
<accession>Q32A57</accession>
<reference key="1">
    <citation type="journal article" date="2005" name="Nucleic Acids Res.">
        <title>Genome dynamics and diversity of Shigella species, the etiologic agents of bacillary dysentery.</title>
        <authorList>
            <person name="Yang F."/>
            <person name="Yang J."/>
            <person name="Zhang X."/>
            <person name="Chen L."/>
            <person name="Jiang Y."/>
            <person name="Yan Y."/>
            <person name="Tang X."/>
            <person name="Wang J."/>
            <person name="Xiong Z."/>
            <person name="Dong J."/>
            <person name="Xue Y."/>
            <person name="Zhu Y."/>
            <person name="Xu X."/>
            <person name="Sun L."/>
            <person name="Chen S."/>
            <person name="Nie H."/>
            <person name="Peng J."/>
            <person name="Xu J."/>
            <person name="Wang Y."/>
            <person name="Yuan Z."/>
            <person name="Wen Y."/>
            <person name="Yao Z."/>
            <person name="Shen Y."/>
            <person name="Qiang B."/>
            <person name="Hou Y."/>
            <person name="Yu J."/>
            <person name="Jin Q."/>
        </authorList>
    </citation>
    <scope>NUCLEOTIDE SEQUENCE [LARGE SCALE GENOMIC DNA]</scope>
    <source>
        <strain>Sd197</strain>
    </source>
</reference>
<gene>
    <name evidence="1" type="primary">dtd</name>
    <name type="ordered locus">SDY_3856</name>
</gene>
<sequence length="145" mass="15897">MIALIQRVTRASVTVEGEVTGEIGAGLLVLLGVEKDDDEQKANRLCERVLGYRIFSDAEGKMNLNVQQAGGSVLVVSQFTLAADTERGMRPSFSKGASPDRAEALYDYFVERCCQQEMNTQTGRFAADMQVSLVNDGPVTFWLQV</sequence>
<feature type="chain" id="PRO_0000259312" description="D-aminoacyl-tRNA deacylase">
    <location>
        <begin position="1"/>
        <end position="145"/>
    </location>
</feature>
<feature type="short sequence motif" description="Gly-cisPro motif, important for rejection of L-amino acids" evidence="1">
    <location>
        <begin position="137"/>
        <end position="138"/>
    </location>
</feature>